<name>GLNA_CRYNB</name>
<keyword id="KW-0067">ATP-binding</keyword>
<keyword id="KW-0963">Cytoplasm</keyword>
<keyword id="KW-0436">Ligase</keyword>
<keyword id="KW-0547">Nucleotide-binding</keyword>
<protein>
    <recommendedName>
        <fullName>Glutamine synthetase</fullName>
        <shortName>GS</shortName>
        <ecNumber>6.3.1.2</ecNumber>
    </recommendedName>
    <alternativeName>
        <fullName>Glutamate--ammonia ligase</fullName>
    </alternativeName>
</protein>
<dbReference type="EC" id="6.3.1.2"/>
<dbReference type="EMBL" id="AAEY01000002">
    <property type="protein sequence ID" value="EAL23304.1"/>
    <property type="molecule type" value="Genomic_DNA"/>
</dbReference>
<dbReference type="RefSeq" id="XP_777951.1">
    <property type="nucleotide sequence ID" value="XM_772858.1"/>
</dbReference>
<dbReference type="SMR" id="P0CN85"/>
<dbReference type="EnsemblFungi" id="ALO60332">
    <property type="protein sequence ID" value="ALO60332"/>
    <property type="gene ID" value="CNA04370"/>
</dbReference>
<dbReference type="GeneID" id="4933679"/>
<dbReference type="KEGG" id="cnb:CNBA4200"/>
<dbReference type="VEuPathDB" id="FungiDB:CNBA4200"/>
<dbReference type="HOGENOM" id="CLU_036762_1_1_1"/>
<dbReference type="OrthoDB" id="45at5206"/>
<dbReference type="GO" id="GO:0005737">
    <property type="term" value="C:cytoplasm"/>
    <property type="evidence" value="ECO:0007669"/>
    <property type="project" value="UniProtKB-SubCell"/>
</dbReference>
<dbReference type="GO" id="GO:0005524">
    <property type="term" value="F:ATP binding"/>
    <property type="evidence" value="ECO:0007669"/>
    <property type="project" value="UniProtKB-KW"/>
</dbReference>
<dbReference type="GO" id="GO:0004356">
    <property type="term" value="F:glutamine synthetase activity"/>
    <property type="evidence" value="ECO:0007669"/>
    <property type="project" value="UniProtKB-EC"/>
</dbReference>
<dbReference type="GO" id="GO:0006542">
    <property type="term" value="P:glutamine biosynthetic process"/>
    <property type="evidence" value="ECO:0007669"/>
    <property type="project" value="InterPro"/>
</dbReference>
<dbReference type="FunFam" id="3.10.20.70:FF:000004">
    <property type="entry name" value="Glutamine synthetase"/>
    <property type="match status" value="1"/>
</dbReference>
<dbReference type="FunFam" id="3.30.590.10:FF:000004">
    <property type="entry name" value="Glutamine synthetase"/>
    <property type="match status" value="1"/>
</dbReference>
<dbReference type="Gene3D" id="3.10.20.70">
    <property type="entry name" value="Glutamine synthetase, N-terminal domain"/>
    <property type="match status" value="1"/>
</dbReference>
<dbReference type="Gene3D" id="3.30.590.10">
    <property type="entry name" value="Glutamine synthetase/guanido kinase, catalytic domain"/>
    <property type="match status" value="1"/>
</dbReference>
<dbReference type="InterPro" id="IPR008147">
    <property type="entry name" value="Gln_synt_N"/>
</dbReference>
<dbReference type="InterPro" id="IPR036651">
    <property type="entry name" value="Gln_synt_N_sf"/>
</dbReference>
<dbReference type="InterPro" id="IPR014746">
    <property type="entry name" value="Gln_synth/guanido_kin_cat_dom"/>
</dbReference>
<dbReference type="InterPro" id="IPR008146">
    <property type="entry name" value="Gln_synth_cat_dom"/>
</dbReference>
<dbReference type="InterPro" id="IPR027303">
    <property type="entry name" value="Gln_synth_gly_rich_site"/>
</dbReference>
<dbReference type="InterPro" id="IPR027302">
    <property type="entry name" value="Gln_synth_N_conserv_site"/>
</dbReference>
<dbReference type="InterPro" id="IPR050292">
    <property type="entry name" value="Glutamine_Synthetase"/>
</dbReference>
<dbReference type="PANTHER" id="PTHR20852">
    <property type="entry name" value="GLUTAMINE SYNTHETASE"/>
    <property type="match status" value="1"/>
</dbReference>
<dbReference type="PANTHER" id="PTHR20852:SF57">
    <property type="entry name" value="GLUTAMINE SYNTHETASE 2 CYTOPLASMIC"/>
    <property type="match status" value="1"/>
</dbReference>
<dbReference type="Pfam" id="PF00120">
    <property type="entry name" value="Gln-synt_C"/>
    <property type="match status" value="1"/>
</dbReference>
<dbReference type="Pfam" id="PF03951">
    <property type="entry name" value="Gln-synt_N"/>
    <property type="match status" value="1"/>
</dbReference>
<dbReference type="SMART" id="SM01230">
    <property type="entry name" value="Gln-synt_C"/>
    <property type="match status" value="1"/>
</dbReference>
<dbReference type="SUPFAM" id="SSF54368">
    <property type="entry name" value="Glutamine synthetase, N-terminal domain"/>
    <property type="match status" value="1"/>
</dbReference>
<dbReference type="SUPFAM" id="SSF55931">
    <property type="entry name" value="Glutamine synthetase/guanido kinase"/>
    <property type="match status" value="1"/>
</dbReference>
<dbReference type="PROSITE" id="PS00180">
    <property type="entry name" value="GLNA_1"/>
    <property type="match status" value="1"/>
</dbReference>
<dbReference type="PROSITE" id="PS00181">
    <property type="entry name" value="GLNA_ATP"/>
    <property type="match status" value="1"/>
</dbReference>
<dbReference type="PROSITE" id="PS51986">
    <property type="entry name" value="GS_BETA_GRASP"/>
    <property type="match status" value="1"/>
</dbReference>
<dbReference type="PROSITE" id="PS51987">
    <property type="entry name" value="GS_CATALYTIC"/>
    <property type="match status" value="1"/>
</dbReference>
<sequence length="358" mass="39516">MSQLIATKRVDLLAPYLALDQGSRVQAEYIWIDAEGGIRSKTMTLDKAPSSVADLKEWNFDGSSTNQAPADNSDVFLRPVAIFKDPFRGGANILVLCECYDNDGTPNKSNYRAHCKKVMDAAKDTEPWFGLEQEYTLFDADGQVFGWPKNGFPGPQGPYYCGVGAGKVFARDFIEAHYRACLYAGIKISGINAEVMPSQWEFQVGPCTGIEMGDHLWMARFLLLRIGEEWGITPSLHPKPLKGDWNGAGCHSNYSTKDMRTPGKGMAAIEDAIKKLEKKHLEHIAVYGEDNDLRLTGKHETASMTTFSAGVANRGASIRIPRHVGAQGYGYLEDRRPASNVDPYRVTAILVETTVLNN</sequence>
<accession>P0CN85</accession>
<accession>D3NQ34</accession>
<accession>Q55ZS0</accession>
<accession>Q5KP31</accession>
<accession>Q96UG9</accession>
<proteinExistence type="inferred from homology"/>
<reference key="1">
    <citation type="journal article" date="2005" name="Science">
        <title>The genome of the basidiomycetous yeast and human pathogen Cryptococcus neoformans.</title>
        <authorList>
            <person name="Loftus B.J."/>
            <person name="Fung E."/>
            <person name="Roncaglia P."/>
            <person name="Rowley D."/>
            <person name="Amedeo P."/>
            <person name="Bruno D."/>
            <person name="Vamathevan J."/>
            <person name="Miranda M."/>
            <person name="Anderson I.J."/>
            <person name="Fraser J.A."/>
            <person name="Allen J.E."/>
            <person name="Bosdet I.E."/>
            <person name="Brent M.R."/>
            <person name="Chiu R."/>
            <person name="Doering T.L."/>
            <person name="Donlin M.J."/>
            <person name="D'Souza C.A."/>
            <person name="Fox D.S."/>
            <person name="Grinberg V."/>
            <person name="Fu J."/>
            <person name="Fukushima M."/>
            <person name="Haas B.J."/>
            <person name="Huang J.C."/>
            <person name="Janbon G."/>
            <person name="Jones S.J.M."/>
            <person name="Koo H.L."/>
            <person name="Krzywinski M.I."/>
            <person name="Kwon-Chung K.J."/>
            <person name="Lengeler K.B."/>
            <person name="Maiti R."/>
            <person name="Marra M.A."/>
            <person name="Marra R.E."/>
            <person name="Mathewson C.A."/>
            <person name="Mitchell T.G."/>
            <person name="Pertea M."/>
            <person name="Riggs F.R."/>
            <person name="Salzberg S.L."/>
            <person name="Schein J.E."/>
            <person name="Shvartsbeyn A."/>
            <person name="Shin H."/>
            <person name="Shumway M."/>
            <person name="Specht C.A."/>
            <person name="Suh B.B."/>
            <person name="Tenney A."/>
            <person name="Utterback T.R."/>
            <person name="Wickes B.L."/>
            <person name="Wortman J.R."/>
            <person name="Wye N.H."/>
            <person name="Kronstad J.W."/>
            <person name="Lodge J.K."/>
            <person name="Heitman J."/>
            <person name="Davis R.W."/>
            <person name="Fraser C.M."/>
            <person name="Hyman R.W."/>
        </authorList>
    </citation>
    <scope>NUCLEOTIDE SEQUENCE [LARGE SCALE GENOMIC DNA]</scope>
    <source>
        <strain>B-3501A</strain>
    </source>
</reference>
<organism>
    <name type="scientific">Cryptococcus neoformans var. neoformans serotype D (strain B-3501A)</name>
    <name type="common">Filobasidiella neoformans</name>
    <dbReference type="NCBI Taxonomy" id="283643"/>
    <lineage>
        <taxon>Eukaryota</taxon>
        <taxon>Fungi</taxon>
        <taxon>Dikarya</taxon>
        <taxon>Basidiomycota</taxon>
        <taxon>Agaricomycotina</taxon>
        <taxon>Tremellomycetes</taxon>
        <taxon>Tremellales</taxon>
        <taxon>Cryptococcaceae</taxon>
        <taxon>Cryptococcus</taxon>
        <taxon>Cryptococcus neoformans species complex</taxon>
    </lineage>
</organism>
<evidence type="ECO:0000250" key="1"/>
<evidence type="ECO:0000255" key="2">
    <source>
        <dbReference type="PROSITE-ProRule" id="PRU01330"/>
    </source>
</evidence>
<evidence type="ECO:0000255" key="3">
    <source>
        <dbReference type="PROSITE-ProRule" id="PRU01331"/>
    </source>
</evidence>
<evidence type="ECO:0000305" key="4"/>
<gene>
    <name type="primary">GLN1</name>
    <name type="synonym">FGS</name>
    <name type="ordered locus">CNBA4200</name>
</gene>
<feature type="chain" id="PRO_0000410097" description="Glutamine synthetase">
    <location>
        <begin position="1"/>
        <end position="358"/>
    </location>
</feature>
<feature type="domain" description="GS beta-grasp" evidence="2">
    <location>
        <begin position="25"/>
        <end position="104"/>
    </location>
</feature>
<feature type="domain" description="GS catalytic" evidence="3">
    <location>
        <begin position="111"/>
        <end position="358"/>
    </location>
</feature>
<comment type="catalytic activity">
    <reaction>
        <text>L-glutamate + NH4(+) + ATP = L-glutamine + ADP + phosphate + H(+)</text>
        <dbReference type="Rhea" id="RHEA:16169"/>
        <dbReference type="ChEBI" id="CHEBI:15378"/>
        <dbReference type="ChEBI" id="CHEBI:28938"/>
        <dbReference type="ChEBI" id="CHEBI:29985"/>
        <dbReference type="ChEBI" id="CHEBI:30616"/>
        <dbReference type="ChEBI" id="CHEBI:43474"/>
        <dbReference type="ChEBI" id="CHEBI:58359"/>
        <dbReference type="ChEBI" id="CHEBI:456216"/>
        <dbReference type="EC" id="6.3.1.2"/>
    </reaction>
</comment>
<comment type="subunit">
    <text evidence="1">Homooctamer.</text>
</comment>
<comment type="subcellular location">
    <subcellularLocation>
        <location evidence="1">Cytoplasm</location>
    </subcellularLocation>
</comment>
<comment type="similarity">
    <text evidence="4">Belongs to the glutamine synthetase family.</text>
</comment>